<gene>
    <name evidence="1" type="primary">lacG</name>
    <name type="ordered locus">SpyM3_1653</name>
</gene>
<accession>P0DB40</accession>
<accession>Q79W99</accession>
<accession>Q8K5V1</accession>
<dbReference type="EC" id="3.2.1.85" evidence="1"/>
<dbReference type="EMBL" id="AE014074">
    <property type="protein sequence ID" value="AAM80260.1"/>
    <property type="molecule type" value="Genomic_DNA"/>
</dbReference>
<dbReference type="RefSeq" id="WP_011055001.1">
    <property type="nucleotide sequence ID" value="NC_004070.1"/>
</dbReference>
<dbReference type="SMR" id="P0DB40"/>
<dbReference type="CAZy" id="GH1">
    <property type="family name" value="Glycoside Hydrolase Family 1"/>
</dbReference>
<dbReference type="KEGG" id="spg:SpyM3_1653"/>
<dbReference type="HOGENOM" id="CLU_001859_1_3_9"/>
<dbReference type="UniPathway" id="UPA00542">
    <property type="reaction ID" value="UER00605"/>
</dbReference>
<dbReference type="Proteomes" id="UP000000564">
    <property type="component" value="Chromosome"/>
</dbReference>
<dbReference type="GO" id="GO:0005829">
    <property type="term" value="C:cytosol"/>
    <property type="evidence" value="ECO:0007669"/>
    <property type="project" value="TreeGrafter"/>
</dbReference>
<dbReference type="GO" id="GO:0033920">
    <property type="term" value="F:6-phospho-beta-galactosidase activity"/>
    <property type="evidence" value="ECO:0007669"/>
    <property type="project" value="UniProtKB-UniRule"/>
</dbReference>
<dbReference type="GO" id="GO:0008422">
    <property type="term" value="F:beta-glucosidase activity"/>
    <property type="evidence" value="ECO:0007669"/>
    <property type="project" value="TreeGrafter"/>
</dbReference>
<dbReference type="GO" id="GO:0019512">
    <property type="term" value="P:lactose catabolic process via tagatose-6-phosphate"/>
    <property type="evidence" value="ECO:0007669"/>
    <property type="project" value="InterPro"/>
</dbReference>
<dbReference type="FunFam" id="3.20.20.80:FF:000004">
    <property type="entry name" value="Beta-glucosidase 6-phospho-beta-glucosidase"/>
    <property type="match status" value="1"/>
</dbReference>
<dbReference type="Gene3D" id="3.20.20.80">
    <property type="entry name" value="Glycosidases"/>
    <property type="match status" value="1"/>
</dbReference>
<dbReference type="HAMAP" id="MF_01574">
    <property type="entry name" value="LacG"/>
    <property type="match status" value="1"/>
</dbReference>
<dbReference type="InterPro" id="IPR005928">
    <property type="entry name" value="6P-beta-galactosidase"/>
</dbReference>
<dbReference type="InterPro" id="IPR001360">
    <property type="entry name" value="Glyco_hydro_1"/>
</dbReference>
<dbReference type="InterPro" id="IPR018120">
    <property type="entry name" value="Glyco_hydro_1_AS"/>
</dbReference>
<dbReference type="InterPro" id="IPR033132">
    <property type="entry name" value="Glyco_hydro_1_N_CS"/>
</dbReference>
<dbReference type="InterPro" id="IPR017853">
    <property type="entry name" value="Glycoside_hydrolase_SF"/>
</dbReference>
<dbReference type="NCBIfam" id="TIGR01233">
    <property type="entry name" value="lacG"/>
    <property type="match status" value="1"/>
</dbReference>
<dbReference type="NCBIfam" id="NF010036">
    <property type="entry name" value="PRK13511.1"/>
    <property type="match status" value="1"/>
</dbReference>
<dbReference type="PANTHER" id="PTHR10353">
    <property type="entry name" value="GLYCOSYL HYDROLASE"/>
    <property type="match status" value="1"/>
</dbReference>
<dbReference type="PANTHER" id="PTHR10353:SF36">
    <property type="entry name" value="LP05116P"/>
    <property type="match status" value="1"/>
</dbReference>
<dbReference type="Pfam" id="PF00232">
    <property type="entry name" value="Glyco_hydro_1"/>
    <property type="match status" value="1"/>
</dbReference>
<dbReference type="PRINTS" id="PR00131">
    <property type="entry name" value="GLHYDRLASE1"/>
</dbReference>
<dbReference type="SUPFAM" id="SSF51445">
    <property type="entry name" value="(Trans)glycosidases"/>
    <property type="match status" value="1"/>
</dbReference>
<dbReference type="PROSITE" id="PS00572">
    <property type="entry name" value="GLYCOSYL_HYDROL_F1_1"/>
    <property type="match status" value="1"/>
</dbReference>
<dbReference type="PROSITE" id="PS00653">
    <property type="entry name" value="GLYCOSYL_HYDROL_F1_2"/>
    <property type="match status" value="1"/>
</dbReference>
<organism>
    <name type="scientific">Streptococcus pyogenes serotype M3 (strain ATCC BAA-595 / MGAS315)</name>
    <dbReference type="NCBI Taxonomy" id="198466"/>
    <lineage>
        <taxon>Bacteria</taxon>
        <taxon>Bacillati</taxon>
        <taxon>Bacillota</taxon>
        <taxon>Bacilli</taxon>
        <taxon>Lactobacillales</taxon>
        <taxon>Streptococcaceae</taxon>
        <taxon>Streptococcus</taxon>
    </lineage>
</organism>
<keyword id="KW-0326">Glycosidase</keyword>
<keyword id="KW-0378">Hydrolase</keyword>
<feature type="chain" id="PRO_0000260740" description="6-phospho-beta-galactosidase">
    <location>
        <begin position="1"/>
        <end position="468"/>
    </location>
</feature>
<feature type="active site" description="Proton donor" evidence="1">
    <location>
        <position position="160"/>
    </location>
</feature>
<feature type="active site" description="Nucleophile" evidence="1">
    <location>
        <position position="375"/>
    </location>
</feature>
<feature type="binding site" evidence="1">
    <location>
        <position position="19"/>
    </location>
    <ligand>
        <name>D-galactose 6-phosphate</name>
        <dbReference type="ChEBI" id="CHEBI:91004"/>
    </ligand>
</feature>
<feature type="binding site" evidence="1">
    <location>
        <position position="116"/>
    </location>
    <ligand>
        <name>D-galactose 6-phosphate</name>
        <dbReference type="ChEBI" id="CHEBI:91004"/>
    </ligand>
</feature>
<feature type="binding site" evidence="1">
    <location>
        <position position="159"/>
    </location>
    <ligand>
        <name>D-galactose 6-phosphate</name>
        <dbReference type="ChEBI" id="CHEBI:91004"/>
    </ligand>
</feature>
<feature type="binding site" evidence="1">
    <location>
        <position position="160"/>
    </location>
    <ligand>
        <name>D-galactose 6-phosphate</name>
        <dbReference type="ChEBI" id="CHEBI:91004"/>
    </ligand>
</feature>
<feature type="binding site" evidence="1">
    <location>
        <position position="297"/>
    </location>
    <ligand>
        <name>D-galactose 6-phosphate</name>
        <dbReference type="ChEBI" id="CHEBI:91004"/>
    </ligand>
</feature>
<feature type="binding site" evidence="1">
    <location>
        <position position="428"/>
    </location>
    <ligand>
        <name>D-galactose 6-phosphate</name>
        <dbReference type="ChEBI" id="CHEBI:91004"/>
    </ligand>
</feature>
<feature type="binding site" evidence="1">
    <location>
        <position position="429"/>
    </location>
    <ligand>
        <name>D-galactose 6-phosphate</name>
        <dbReference type="ChEBI" id="CHEBI:91004"/>
    </ligand>
</feature>
<feature type="binding site" evidence="1">
    <location>
        <position position="435"/>
    </location>
    <ligand>
        <name>D-galactose 6-phosphate</name>
        <dbReference type="ChEBI" id="CHEBI:91004"/>
    </ligand>
</feature>
<feature type="binding site" evidence="1">
    <location>
        <position position="437"/>
    </location>
    <ligand>
        <name>D-galactose 6-phosphate</name>
        <dbReference type="ChEBI" id="CHEBI:91004"/>
    </ligand>
</feature>
<sequence length="468" mass="53874">MTKTLPKDFIFGGATAAYQAEGATHTDGKGPVAWDKYLEDNYWYTAEPASDFYNRYPVDLKLSEEFGVNGIRISIAWSRIFPTGKGEVNPKGVEYYHNLFAECHKRHVEPFVTLHHFDTPEALHSDGDFLNRENIEHFVNYAEFCFKEFSEVNYWTTFNEIGPIGDGQYLVGKFPPGIQYDLAKVFQSHHNMMVSHARAVKLFKDSGYSGEIGVVHALPTKYPFDANNPDDVRAAELEDIIHNKFILDATYLGKYSDKTMEGVNHILEVNGGELDLREEDFAALDAAKDLNDFLGINYYMSDWMQAFDGETEIIHNGKGEKGSSKYQIKGVGRRKAPVDVPKTDWDWIIFPQGLYDQIMRVKADYPNYKKIYITENGLGYKDEFVDNTVYDDGRIDYVKKHLEVISDAISDGVNVKGYFMWSLMDVFSWSNGYEKRYGLFYVDFETQERYPKKSAYWYKKVAETQVIE</sequence>
<comment type="catalytic activity">
    <reaction evidence="1">
        <text>a 6-phospho-beta-D-galactoside + H2O = D-galactose 6-phosphate + an alcohol</text>
        <dbReference type="Rhea" id="RHEA:24568"/>
        <dbReference type="ChEBI" id="CHEBI:15377"/>
        <dbReference type="ChEBI" id="CHEBI:30879"/>
        <dbReference type="ChEBI" id="CHEBI:58534"/>
        <dbReference type="ChEBI" id="CHEBI:91004"/>
        <dbReference type="EC" id="3.2.1.85"/>
    </reaction>
</comment>
<comment type="pathway">
    <text evidence="1">Carbohydrate metabolism; lactose degradation; D-galactose 6-phosphate and beta-D-glucose from lactose 6-phosphate: step 1/1.</text>
</comment>
<comment type="similarity">
    <text evidence="1">Belongs to the glycosyl hydrolase 1 family.</text>
</comment>
<protein>
    <recommendedName>
        <fullName evidence="1">6-phospho-beta-galactosidase</fullName>
        <ecNumber evidence="1">3.2.1.85</ecNumber>
    </recommendedName>
    <alternativeName>
        <fullName evidence="1">Beta-D-phosphogalactoside galactohydrolase</fullName>
        <shortName evidence="1">PGALase</shortName>
    </alternativeName>
    <alternativeName>
        <fullName evidence="1">P-beta-Gal</fullName>
        <shortName evidence="1">PBG</shortName>
    </alternativeName>
</protein>
<proteinExistence type="inferred from homology"/>
<reference key="1">
    <citation type="journal article" date="2002" name="Proc. Natl. Acad. Sci. U.S.A.">
        <title>Genome sequence of a serotype M3 strain of group A Streptococcus: phage-encoded toxins, the high-virulence phenotype, and clone emergence.</title>
        <authorList>
            <person name="Beres S.B."/>
            <person name="Sylva G.L."/>
            <person name="Barbian K.D."/>
            <person name="Lei B."/>
            <person name="Hoff J.S."/>
            <person name="Mammarella N.D."/>
            <person name="Liu M.-Y."/>
            <person name="Smoot J.C."/>
            <person name="Porcella S.F."/>
            <person name="Parkins L.D."/>
            <person name="Campbell D.S."/>
            <person name="Smith T.M."/>
            <person name="McCormick J.K."/>
            <person name="Leung D.Y.M."/>
            <person name="Schlievert P.M."/>
            <person name="Musser J.M."/>
        </authorList>
    </citation>
    <scope>NUCLEOTIDE SEQUENCE [LARGE SCALE GENOMIC DNA]</scope>
    <source>
        <strain>ATCC BAA-595 / MGAS315</strain>
    </source>
</reference>
<name>LACG_STRP3</name>
<evidence type="ECO:0000255" key="1">
    <source>
        <dbReference type="HAMAP-Rule" id="MF_01574"/>
    </source>
</evidence>